<keyword id="KW-0067">ATP-binding</keyword>
<keyword id="KW-0963">Cytoplasm</keyword>
<keyword id="KW-0418">Kinase</keyword>
<keyword id="KW-0547">Nucleotide-binding</keyword>
<keyword id="KW-1185">Reference proteome</keyword>
<keyword id="KW-0808">Transferase</keyword>
<proteinExistence type="inferred from homology"/>
<feature type="chain" id="PRO_1000100692" description="Cytidylate kinase">
    <location>
        <begin position="1"/>
        <end position="225"/>
    </location>
</feature>
<feature type="binding site" evidence="1">
    <location>
        <begin position="12"/>
        <end position="20"/>
    </location>
    <ligand>
        <name>ATP</name>
        <dbReference type="ChEBI" id="CHEBI:30616"/>
    </ligand>
</feature>
<evidence type="ECO:0000255" key="1">
    <source>
        <dbReference type="HAMAP-Rule" id="MF_00238"/>
    </source>
</evidence>
<accession>B2FNP4</accession>
<sequence length="225" mass="24287">MNPLAPVLTIDGPSGAGKGTISRIIARRMGWHYLDSGALYRAVGVAASWADIDTSDASALVRCTFDTHVQFVEQGESMRVMVNGTDATDELRLETTGALASAIAAIPEVRAALKERQRAFRELPGLVADGRDMGTVIFKDAPYKVFLTASAEERAERRHKQLKDKGVSVNFDDLLREIMARDARDAQRTVAPLKPADDAVLIDTTGIGIDDVVARVMDLLPVPAA</sequence>
<organism>
    <name type="scientific">Stenotrophomonas maltophilia (strain K279a)</name>
    <dbReference type="NCBI Taxonomy" id="522373"/>
    <lineage>
        <taxon>Bacteria</taxon>
        <taxon>Pseudomonadati</taxon>
        <taxon>Pseudomonadota</taxon>
        <taxon>Gammaproteobacteria</taxon>
        <taxon>Lysobacterales</taxon>
        <taxon>Lysobacteraceae</taxon>
        <taxon>Stenotrophomonas</taxon>
        <taxon>Stenotrophomonas maltophilia group</taxon>
    </lineage>
</organism>
<gene>
    <name evidence="1" type="primary">cmk</name>
    <name type="ordered locus">Smlt2042</name>
</gene>
<name>KCY_STRMK</name>
<protein>
    <recommendedName>
        <fullName evidence="1">Cytidylate kinase</fullName>
        <shortName evidence="1">CK</shortName>
        <ecNumber evidence="1">2.7.4.25</ecNumber>
    </recommendedName>
    <alternativeName>
        <fullName evidence="1">Cytidine monophosphate kinase</fullName>
        <shortName evidence="1">CMP kinase</shortName>
    </alternativeName>
</protein>
<comment type="catalytic activity">
    <reaction evidence="1">
        <text>CMP + ATP = CDP + ADP</text>
        <dbReference type="Rhea" id="RHEA:11600"/>
        <dbReference type="ChEBI" id="CHEBI:30616"/>
        <dbReference type="ChEBI" id="CHEBI:58069"/>
        <dbReference type="ChEBI" id="CHEBI:60377"/>
        <dbReference type="ChEBI" id="CHEBI:456216"/>
        <dbReference type="EC" id="2.7.4.25"/>
    </reaction>
</comment>
<comment type="catalytic activity">
    <reaction evidence="1">
        <text>dCMP + ATP = dCDP + ADP</text>
        <dbReference type="Rhea" id="RHEA:25094"/>
        <dbReference type="ChEBI" id="CHEBI:30616"/>
        <dbReference type="ChEBI" id="CHEBI:57566"/>
        <dbReference type="ChEBI" id="CHEBI:58593"/>
        <dbReference type="ChEBI" id="CHEBI:456216"/>
        <dbReference type="EC" id="2.7.4.25"/>
    </reaction>
</comment>
<comment type="subcellular location">
    <subcellularLocation>
        <location evidence="1">Cytoplasm</location>
    </subcellularLocation>
</comment>
<comment type="similarity">
    <text evidence="1">Belongs to the cytidylate kinase family. Type 1 subfamily.</text>
</comment>
<reference key="1">
    <citation type="journal article" date="2008" name="Genome Biol.">
        <title>The complete genome, comparative and functional analysis of Stenotrophomonas maltophilia reveals an organism heavily shielded by drug resistance determinants.</title>
        <authorList>
            <person name="Crossman L.C."/>
            <person name="Gould V.C."/>
            <person name="Dow J.M."/>
            <person name="Vernikos G.S."/>
            <person name="Okazaki A."/>
            <person name="Sebaihia M."/>
            <person name="Saunders D."/>
            <person name="Arrowsmith C."/>
            <person name="Carver T."/>
            <person name="Peters N."/>
            <person name="Adlem E."/>
            <person name="Kerhornou A."/>
            <person name="Lord A."/>
            <person name="Murphy L."/>
            <person name="Seeger K."/>
            <person name="Squares R."/>
            <person name="Rutter S."/>
            <person name="Quail M.A."/>
            <person name="Rajandream M.A."/>
            <person name="Harris D."/>
            <person name="Churcher C."/>
            <person name="Bentley S.D."/>
            <person name="Parkhill J."/>
            <person name="Thomson N.R."/>
            <person name="Avison M.B."/>
        </authorList>
    </citation>
    <scope>NUCLEOTIDE SEQUENCE [LARGE SCALE GENOMIC DNA]</scope>
    <source>
        <strain>K279a</strain>
    </source>
</reference>
<dbReference type="EC" id="2.7.4.25" evidence="1"/>
<dbReference type="EMBL" id="AM743169">
    <property type="protein sequence ID" value="CAQ45550.1"/>
    <property type="molecule type" value="Genomic_DNA"/>
</dbReference>
<dbReference type="RefSeq" id="WP_005409284.1">
    <property type="nucleotide sequence ID" value="NC_010943.1"/>
</dbReference>
<dbReference type="SMR" id="B2FNP4"/>
<dbReference type="EnsemblBacteria" id="CAQ45550">
    <property type="protein sequence ID" value="CAQ45550"/>
    <property type="gene ID" value="Smlt2042"/>
</dbReference>
<dbReference type="GeneID" id="93833162"/>
<dbReference type="KEGG" id="sml:Smlt2042"/>
<dbReference type="eggNOG" id="COG0283">
    <property type="taxonomic scope" value="Bacteria"/>
</dbReference>
<dbReference type="HOGENOM" id="CLU_079959_2_0_6"/>
<dbReference type="Proteomes" id="UP000008840">
    <property type="component" value="Chromosome"/>
</dbReference>
<dbReference type="GO" id="GO:0005829">
    <property type="term" value="C:cytosol"/>
    <property type="evidence" value="ECO:0007669"/>
    <property type="project" value="TreeGrafter"/>
</dbReference>
<dbReference type="GO" id="GO:0005524">
    <property type="term" value="F:ATP binding"/>
    <property type="evidence" value="ECO:0007669"/>
    <property type="project" value="UniProtKB-UniRule"/>
</dbReference>
<dbReference type="GO" id="GO:0036430">
    <property type="term" value="F:CMP kinase activity"/>
    <property type="evidence" value="ECO:0007669"/>
    <property type="project" value="RHEA"/>
</dbReference>
<dbReference type="GO" id="GO:0036431">
    <property type="term" value="F:dCMP kinase activity"/>
    <property type="evidence" value="ECO:0007669"/>
    <property type="project" value="RHEA"/>
</dbReference>
<dbReference type="GO" id="GO:0015949">
    <property type="term" value="P:nucleobase-containing small molecule interconversion"/>
    <property type="evidence" value="ECO:0007669"/>
    <property type="project" value="TreeGrafter"/>
</dbReference>
<dbReference type="GO" id="GO:0006220">
    <property type="term" value="P:pyrimidine nucleotide metabolic process"/>
    <property type="evidence" value="ECO:0007669"/>
    <property type="project" value="UniProtKB-UniRule"/>
</dbReference>
<dbReference type="CDD" id="cd02020">
    <property type="entry name" value="CMPK"/>
    <property type="match status" value="1"/>
</dbReference>
<dbReference type="FunFam" id="3.40.50.300:FF:000262">
    <property type="entry name" value="Cytidylate kinase"/>
    <property type="match status" value="1"/>
</dbReference>
<dbReference type="Gene3D" id="3.40.50.300">
    <property type="entry name" value="P-loop containing nucleotide triphosphate hydrolases"/>
    <property type="match status" value="1"/>
</dbReference>
<dbReference type="HAMAP" id="MF_00238">
    <property type="entry name" value="Cytidyl_kinase_type1"/>
    <property type="match status" value="1"/>
</dbReference>
<dbReference type="InterPro" id="IPR003136">
    <property type="entry name" value="Cytidylate_kin"/>
</dbReference>
<dbReference type="InterPro" id="IPR011994">
    <property type="entry name" value="Cytidylate_kinase_dom"/>
</dbReference>
<dbReference type="InterPro" id="IPR027417">
    <property type="entry name" value="P-loop_NTPase"/>
</dbReference>
<dbReference type="NCBIfam" id="TIGR00017">
    <property type="entry name" value="cmk"/>
    <property type="match status" value="1"/>
</dbReference>
<dbReference type="PANTHER" id="PTHR21299:SF2">
    <property type="entry name" value="CYTIDYLATE KINASE"/>
    <property type="match status" value="1"/>
</dbReference>
<dbReference type="PANTHER" id="PTHR21299">
    <property type="entry name" value="CYTIDYLATE KINASE/PANTOATE-BETA-ALANINE LIGASE"/>
    <property type="match status" value="1"/>
</dbReference>
<dbReference type="Pfam" id="PF02224">
    <property type="entry name" value="Cytidylate_kin"/>
    <property type="match status" value="1"/>
</dbReference>
<dbReference type="SUPFAM" id="SSF52540">
    <property type="entry name" value="P-loop containing nucleoside triphosphate hydrolases"/>
    <property type="match status" value="1"/>
</dbReference>